<name>TUSE_BUCAP</name>
<sequence>MLKNNHTKKLYEKIEKDTEGYLKKAADWSIELAKEIAKKEKIVLTNDHWTVINFIRKFYFKFNITPSMRMLIKSIEKKIGLKKSNSIYLFRLFPEGPAKQASKIAGIPKPSRCL</sequence>
<feature type="chain" id="PRO_0000216257" description="Sulfurtransferase TusE">
    <location>
        <begin position="1"/>
        <end position="114"/>
    </location>
</feature>
<feature type="active site" description="Cysteine persulfide intermediate" evidence="1">
    <location>
        <position position="113"/>
    </location>
</feature>
<reference key="1">
    <citation type="journal article" date="2002" name="Science">
        <title>50 million years of genomic stasis in endosymbiotic bacteria.</title>
        <authorList>
            <person name="Tamas I."/>
            <person name="Klasson L."/>
            <person name="Canbaeck B."/>
            <person name="Naeslund A.K."/>
            <person name="Eriksson A.-S."/>
            <person name="Wernegreen J.J."/>
            <person name="Sandstroem J.P."/>
            <person name="Moran N.A."/>
            <person name="Andersson S.G.E."/>
        </authorList>
    </citation>
    <scope>NUCLEOTIDE SEQUENCE [LARGE SCALE GENOMIC DNA]</scope>
    <source>
        <strain>Sg</strain>
    </source>
</reference>
<dbReference type="EC" id="2.8.1.-"/>
<dbReference type="EMBL" id="AE013218">
    <property type="protein sequence ID" value="AAM67994.1"/>
    <property type="molecule type" value="Genomic_DNA"/>
</dbReference>
<dbReference type="RefSeq" id="WP_011053961.1">
    <property type="nucleotide sequence ID" value="NC_004061.1"/>
</dbReference>
<dbReference type="SMR" id="Q8K998"/>
<dbReference type="STRING" id="198804.BUsg_451"/>
<dbReference type="GeneID" id="93003922"/>
<dbReference type="KEGG" id="bas:BUsg_451"/>
<dbReference type="eggNOG" id="COG2920">
    <property type="taxonomic scope" value="Bacteria"/>
</dbReference>
<dbReference type="HOGENOM" id="CLU_153199_1_0_6"/>
<dbReference type="Proteomes" id="UP000000416">
    <property type="component" value="Chromosome"/>
</dbReference>
<dbReference type="GO" id="GO:0005737">
    <property type="term" value="C:cytoplasm"/>
    <property type="evidence" value="ECO:0007669"/>
    <property type="project" value="UniProtKB-SubCell"/>
</dbReference>
<dbReference type="GO" id="GO:0097163">
    <property type="term" value="F:sulfur carrier activity"/>
    <property type="evidence" value="ECO:0007669"/>
    <property type="project" value="TreeGrafter"/>
</dbReference>
<dbReference type="GO" id="GO:0016740">
    <property type="term" value="F:transferase activity"/>
    <property type="evidence" value="ECO:0007669"/>
    <property type="project" value="UniProtKB-KW"/>
</dbReference>
<dbReference type="GO" id="GO:0002143">
    <property type="term" value="P:tRNA wobble position uridine thiolation"/>
    <property type="evidence" value="ECO:0007669"/>
    <property type="project" value="TreeGrafter"/>
</dbReference>
<dbReference type="Gene3D" id="3.30.1420.10">
    <property type="match status" value="1"/>
</dbReference>
<dbReference type="Gene3D" id="1.10.10.370">
    <property type="entry name" value="DsrC-like protein, C-terminal domain"/>
    <property type="match status" value="1"/>
</dbReference>
<dbReference type="InterPro" id="IPR042072">
    <property type="entry name" value="DsrC-like_C"/>
</dbReference>
<dbReference type="InterPro" id="IPR025526">
    <property type="entry name" value="DsrC-like_dom_sf"/>
</dbReference>
<dbReference type="InterPro" id="IPR043163">
    <property type="entry name" value="DsrC-like_N"/>
</dbReference>
<dbReference type="InterPro" id="IPR007453">
    <property type="entry name" value="DsrC/TusE"/>
</dbReference>
<dbReference type="NCBIfam" id="TIGR03342">
    <property type="entry name" value="dsrC_tusE_dsvC"/>
    <property type="match status" value="1"/>
</dbReference>
<dbReference type="PANTHER" id="PTHR37010">
    <property type="entry name" value="SULFURTRANSFERASE TUSE"/>
    <property type="match status" value="1"/>
</dbReference>
<dbReference type="PANTHER" id="PTHR37010:SF1">
    <property type="entry name" value="SULFURTRANSFERASE TUSE"/>
    <property type="match status" value="1"/>
</dbReference>
<dbReference type="Pfam" id="PF04358">
    <property type="entry name" value="DsrC"/>
    <property type="match status" value="1"/>
</dbReference>
<dbReference type="PIRSF" id="PIRSF006223">
    <property type="entry name" value="DsrC_TusE"/>
    <property type="match status" value="1"/>
</dbReference>
<dbReference type="SUPFAM" id="SSF69721">
    <property type="entry name" value="DsrC, the gamma subunit of dissimilatory sulfite reductase"/>
    <property type="match status" value="1"/>
</dbReference>
<gene>
    <name type="primary">tusE</name>
    <name type="ordered locus">BUsg_451</name>
</gene>
<protein>
    <recommendedName>
        <fullName>Sulfurtransferase TusE</fullName>
        <ecNumber>2.8.1.-</ecNumber>
    </recommendedName>
    <alternativeName>
        <fullName>tRNA 2-thiouridine synthesizing protein E</fullName>
    </alternativeName>
</protein>
<comment type="function">
    <text evidence="1">Part of a sulfur-relay system required for 2-thiolation of 5-methylaminomethyl-2-thiouridine (mnm(5)s(2)U) at tRNA wobble positions. Could accept sulfur from TusD (By similarity).</text>
</comment>
<comment type="subunit">
    <text evidence="1">Interacts with the TusBCD complex. Interacts with MnmA (By similarity).</text>
</comment>
<comment type="subcellular location">
    <subcellularLocation>
        <location evidence="1">Cytoplasm</location>
    </subcellularLocation>
</comment>
<comment type="similarity">
    <text evidence="2">Belongs to the DsrC/TusE family.</text>
</comment>
<keyword id="KW-0963">Cytoplasm</keyword>
<keyword id="KW-0808">Transferase</keyword>
<keyword id="KW-0819">tRNA processing</keyword>
<accession>Q8K998</accession>
<proteinExistence type="inferred from homology"/>
<organism>
    <name type="scientific">Buchnera aphidicola subsp. Schizaphis graminum (strain Sg)</name>
    <dbReference type="NCBI Taxonomy" id="198804"/>
    <lineage>
        <taxon>Bacteria</taxon>
        <taxon>Pseudomonadati</taxon>
        <taxon>Pseudomonadota</taxon>
        <taxon>Gammaproteobacteria</taxon>
        <taxon>Enterobacterales</taxon>
        <taxon>Erwiniaceae</taxon>
        <taxon>Buchnera</taxon>
    </lineage>
</organism>
<evidence type="ECO:0000250" key="1"/>
<evidence type="ECO:0000305" key="2"/>